<accession>Q7CFM4</accession>
<accession>Q74P97</accession>
<comment type="function">
    <text evidence="1">F(1)F(0) ATP synthase produces ATP from ADP in the presence of a proton or sodium gradient. F-type ATPases consist of two structural domains, F(1) containing the extramembraneous catalytic core and F(0) containing the membrane proton channel, linked together by a central stalk and a peripheral stalk. During catalysis, ATP synthesis in the catalytic domain of F(1) is coupled via a rotary mechanism of the central stalk subunits to proton translocation.</text>
</comment>
<comment type="function">
    <text evidence="1">Component of the F(0) channel, it forms part of the peripheral stalk, linking F(1) to F(0).</text>
</comment>
<comment type="subunit">
    <text evidence="1">F-type ATPases have 2 components, F(1) - the catalytic core - and F(0) - the membrane proton channel. F(1) has five subunits: alpha(3), beta(3), gamma(1), delta(1), epsilon(1). F(0) has three main subunits: a(1), b(2) and c(10-14). The alpha and beta chains form an alternating ring which encloses part of the gamma chain. F(1) is attached to F(0) by a central stalk formed by the gamma and epsilon chains, while a peripheral stalk is formed by the delta and b chains.</text>
</comment>
<comment type="subcellular location">
    <subcellularLocation>
        <location evidence="1">Cell inner membrane</location>
        <topology evidence="1">Single-pass membrane protein</topology>
    </subcellularLocation>
</comment>
<comment type="similarity">
    <text evidence="1">Belongs to the ATPase B chain family.</text>
</comment>
<gene>
    <name evidence="1" type="primary">atpF</name>
    <name type="ordered locus">YPO4125</name>
    <name type="ordered locus">y4139</name>
    <name type="ordered locus">YP_4032</name>
</gene>
<organism>
    <name type="scientific">Yersinia pestis</name>
    <dbReference type="NCBI Taxonomy" id="632"/>
    <lineage>
        <taxon>Bacteria</taxon>
        <taxon>Pseudomonadati</taxon>
        <taxon>Pseudomonadota</taxon>
        <taxon>Gammaproteobacteria</taxon>
        <taxon>Enterobacterales</taxon>
        <taxon>Yersiniaceae</taxon>
        <taxon>Yersinia</taxon>
    </lineage>
</organism>
<proteinExistence type="inferred from homology"/>
<name>ATPF_YERPE</name>
<feature type="chain" id="PRO_0000368878" description="ATP synthase subunit b">
    <location>
        <begin position="1"/>
        <end position="156"/>
    </location>
</feature>
<feature type="transmembrane region" description="Helical" evidence="1">
    <location>
        <begin position="11"/>
        <end position="31"/>
    </location>
</feature>
<dbReference type="EMBL" id="AE009952">
    <property type="protein sequence ID" value="AAM87681.1"/>
    <property type="molecule type" value="Genomic_DNA"/>
</dbReference>
<dbReference type="EMBL" id="AE017042">
    <property type="protein sequence ID" value="AAS64171.1"/>
    <property type="molecule type" value="Genomic_DNA"/>
</dbReference>
<dbReference type="EMBL" id="AL590842">
    <property type="protein sequence ID" value="CAL22693.1"/>
    <property type="molecule type" value="Genomic_DNA"/>
</dbReference>
<dbReference type="PIR" id="AI0500">
    <property type="entry name" value="AI0500"/>
</dbReference>
<dbReference type="RefSeq" id="WP_002220762.1">
    <property type="nucleotide sequence ID" value="NZ_WUCM01000028.1"/>
</dbReference>
<dbReference type="RefSeq" id="YP_002348976.1">
    <property type="nucleotide sequence ID" value="NC_003143.1"/>
</dbReference>
<dbReference type="SMR" id="Q7CFM4"/>
<dbReference type="STRING" id="214092.YPO4125"/>
<dbReference type="PaxDb" id="214092-YPO4125"/>
<dbReference type="DNASU" id="1149086"/>
<dbReference type="EnsemblBacteria" id="AAS64171">
    <property type="protein sequence ID" value="AAS64171"/>
    <property type="gene ID" value="YP_4032"/>
</dbReference>
<dbReference type="GeneID" id="57974599"/>
<dbReference type="KEGG" id="ype:YPO4125"/>
<dbReference type="KEGG" id="ypk:y4139"/>
<dbReference type="KEGG" id="ypm:YP_4032"/>
<dbReference type="PATRIC" id="fig|214092.21.peg.4669"/>
<dbReference type="eggNOG" id="COG0711">
    <property type="taxonomic scope" value="Bacteria"/>
</dbReference>
<dbReference type="HOGENOM" id="CLU_079215_4_5_6"/>
<dbReference type="OMA" id="ILAWFTM"/>
<dbReference type="OrthoDB" id="9788020at2"/>
<dbReference type="Proteomes" id="UP000000815">
    <property type="component" value="Chromosome"/>
</dbReference>
<dbReference type="Proteomes" id="UP000001019">
    <property type="component" value="Chromosome"/>
</dbReference>
<dbReference type="Proteomes" id="UP000002490">
    <property type="component" value="Chromosome"/>
</dbReference>
<dbReference type="GO" id="GO:0005886">
    <property type="term" value="C:plasma membrane"/>
    <property type="evidence" value="ECO:0007669"/>
    <property type="project" value="UniProtKB-SubCell"/>
</dbReference>
<dbReference type="GO" id="GO:0045259">
    <property type="term" value="C:proton-transporting ATP synthase complex"/>
    <property type="evidence" value="ECO:0007669"/>
    <property type="project" value="UniProtKB-KW"/>
</dbReference>
<dbReference type="GO" id="GO:0046933">
    <property type="term" value="F:proton-transporting ATP synthase activity, rotational mechanism"/>
    <property type="evidence" value="ECO:0007669"/>
    <property type="project" value="UniProtKB-UniRule"/>
</dbReference>
<dbReference type="CDD" id="cd06503">
    <property type="entry name" value="ATP-synt_Fo_b"/>
    <property type="match status" value="1"/>
</dbReference>
<dbReference type="FunFam" id="1.20.5.620:FF:000001">
    <property type="entry name" value="ATP synthase subunit b"/>
    <property type="match status" value="1"/>
</dbReference>
<dbReference type="Gene3D" id="1.20.5.620">
    <property type="entry name" value="F1F0 ATP synthase subunit B, membrane domain"/>
    <property type="match status" value="1"/>
</dbReference>
<dbReference type="HAMAP" id="MF_01398">
    <property type="entry name" value="ATP_synth_b_bprime"/>
    <property type="match status" value="1"/>
</dbReference>
<dbReference type="InterPro" id="IPR028987">
    <property type="entry name" value="ATP_synth_B-like_membr_sf"/>
</dbReference>
<dbReference type="InterPro" id="IPR002146">
    <property type="entry name" value="ATP_synth_b/b'su_bac/chlpt"/>
</dbReference>
<dbReference type="InterPro" id="IPR005864">
    <property type="entry name" value="ATP_synth_F0_bsu_bac"/>
</dbReference>
<dbReference type="InterPro" id="IPR050059">
    <property type="entry name" value="ATP_synthase_B_chain"/>
</dbReference>
<dbReference type="NCBIfam" id="TIGR01144">
    <property type="entry name" value="ATP_synt_b"/>
    <property type="match status" value="1"/>
</dbReference>
<dbReference type="NCBIfam" id="NF004411">
    <property type="entry name" value="PRK05759.1-2"/>
    <property type="match status" value="1"/>
</dbReference>
<dbReference type="NCBIfam" id="NF004413">
    <property type="entry name" value="PRK05759.1-4"/>
    <property type="match status" value="1"/>
</dbReference>
<dbReference type="PANTHER" id="PTHR33445:SF1">
    <property type="entry name" value="ATP SYNTHASE SUBUNIT B"/>
    <property type="match status" value="1"/>
</dbReference>
<dbReference type="PANTHER" id="PTHR33445">
    <property type="entry name" value="ATP SYNTHASE SUBUNIT B', CHLOROPLASTIC"/>
    <property type="match status" value="1"/>
</dbReference>
<dbReference type="Pfam" id="PF00430">
    <property type="entry name" value="ATP-synt_B"/>
    <property type="match status" value="1"/>
</dbReference>
<dbReference type="SUPFAM" id="SSF81573">
    <property type="entry name" value="F1F0 ATP synthase subunit B, membrane domain"/>
    <property type="match status" value="1"/>
</dbReference>
<reference key="1">
    <citation type="journal article" date="2002" name="J. Bacteriol.">
        <title>Genome sequence of Yersinia pestis KIM.</title>
        <authorList>
            <person name="Deng W."/>
            <person name="Burland V."/>
            <person name="Plunkett G. III"/>
            <person name="Boutin A."/>
            <person name="Mayhew G.F."/>
            <person name="Liss P."/>
            <person name="Perna N.T."/>
            <person name="Rose D.J."/>
            <person name="Mau B."/>
            <person name="Zhou S."/>
            <person name="Schwartz D.C."/>
            <person name="Fetherston J.D."/>
            <person name="Lindler L.E."/>
            <person name="Brubaker R.R."/>
            <person name="Plano G.V."/>
            <person name="Straley S.C."/>
            <person name="McDonough K.A."/>
            <person name="Nilles M.L."/>
            <person name="Matson J.S."/>
            <person name="Blattner F.R."/>
            <person name="Perry R.D."/>
        </authorList>
    </citation>
    <scope>NUCLEOTIDE SEQUENCE [LARGE SCALE GENOMIC DNA]</scope>
    <source>
        <strain>KIM10+ / Biovar Mediaevalis</strain>
    </source>
</reference>
<reference key="2">
    <citation type="journal article" date="2001" name="Nature">
        <title>Genome sequence of Yersinia pestis, the causative agent of plague.</title>
        <authorList>
            <person name="Parkhill J."/>
            <person name="Wren B.W."/>
            <person name="Thomson N.R."/>
            <person name="Titball R.W."/>
            <person name="Holden M.T.G."/>
            <person name="Prentice M.B."/>
            <person name="Sebaihia M."/>
            <person name="James K.D."/>
            <person name="Churcher C.M."/>
            <person name="Mungall K.L."/>
            <person name="Baker S."/>
            <person name="Basham D."/>
            <person name="Bentley S.D."/>
            <person name="Brooks K."/>
            <person name="Cerdeno-Tarraga A.-M."/>
            <person name="Chillingworth T."/>
            <person name="Cronin A."/>
            <person name="Davies R.M."/>
            <person name="Davis P."/>
            <person name="Dougan G."/>
            <person name="Feltwell T."/>
            <person name="Hamlin N."/>
            <person name="Holroyd S."/>
            <person name="Jagels K."/>
            <person name="Karlyshev A.V."/>
            <person name="Leather S."/>
            <person name="Moule S."/>
            <person name="Oyston P.C.F."/>
            <person name="Quail M.A."/>
            <person name="Rutherford K.M."/>
            <person name="Simmonds M."/>
            <person name="Skelton J."/>
            <person name="Stevens K."/>
            <person name="Whitehead S."/>
            <person name="Barrell B.G."/>
        </authorList>
    </citation>
    <scope>NUCLEOTIDE SEQUENCE [LARGE SCALE GENOMIC DNA]</scope>
    <source>
        <strain>CO-92 / Biovar Orientalis</strain>
    </source>
</reference>
<reference key="3">
    <citation type="journal article" date="2004" name="DNA Res.">
        <title>Complete genome sequence of Yersinia pestis strain 91001, an isolate avirulent to humans.</title>
        <authorList>
            <person name="Song Y."/>
            <person name="Tong Z."/>
            <person name="Wang J."/>
            <person name="Wang L."/>
            <person name="Guo Z."/>
            <person name="Han Y."/>
            <person name="Zhang J."/>
            <person name="Pei D."/>
            <person name="Zhou D."/>
            <person name="Qin H."/>
            <person name="Pang X."/>
            <person name="Han Y."/>
            <person name="Zhai J."/>
            <person name="Li M."/>
            <person name="Cui B."/>
            <person name="Qi Z."/>
            <person name="Jin L."/>
            <person name="Dai R."/>
            <person name="Chen F."/>
            <person name="Li S."/>
            <person name="Ye C."/>
            <person name="Du Z."/>
            <person name="Lin W."/>
            <person name="Wang J."/>
            <person name="Yu J."/>
            <person name="Yang H."/>
            <person name="Wang J."/>
            <person name="Huang P."/>
            <person name="Yang R."/>
        </authorList>
    </citation>
    <scope>NUCLEOTIDE SEQUENCE [LARGE SCALE GENOMIC DNA]</scope>
    <source>
        <strain>91001 / Biovar Mediaevalis</strain>
    </source>
</reference>
<sequence>MNLNATILGQAIAFVLFVIFCMKYVWPPIMAAIEKRQQEIADGLSSAERAKKDLDLAQANATDQLKKAKAEAQVIIEQASKRKAQILDEAKAEAEQERNKIVAQAQAEIDAERKRAREELRKQVAMLAIAGAEKIIERSVDEAANSDIVDKLVAEL</sequence>
<protein>
    <recommendedName>
        <fullName evidence="1">ATP synthase subunit b</fullName>
    </recommendedName>
    <alternativeName>
        <fullName evidence="1">ATP synthase F(0) sector subunit b</fullName>
    </alternativeName>
    <alternativeName>
        <fullName evidence="1">ATPase subunit I</fullName>
    </alternativeName>
    <alternativeName>
        <fullName evidence="1">F-type ATPase subunit b</fullName>
        <shortName evidence="1">F-ATPase subunit b</shortName>
    </alternativeName>
</protein>
<evidence type="ECO:0000255" key="1">
    <source>
        <dbReference type="HAMAP-Rule" id="MF_01398"/>
    </source>
</evidence>
<keyword id="KW-0066">ATP synthesis</keyword>
<keyword id="KW-0997">Cell inner membrane</keyword>
<keyword id="KW-1003">Cell membrane</keyword>
<keyword id="KW-0138">CF(0)</keyword>
<keyword id="KW-0375">Hydrogen ion transport</keyword>
<keyword id="KW-0406">Ion transport</keyword>
<keyword id="KW-0472">Membrane</keyword>
<keyword id="KW-1185">Reference proteome</keyword>
<keyword id="KW-0812">Transmembrane</keyword>
<keyword id="KW-1133">Transmembrane helix</keyword>
<keyword id="KW-0813">Transport</keyword>